<sequence>MTDKRKDGSGKLLYCSFCGKSQHEVRKLIAGPSVYICDECVDLCNDIIREEIKEVAPHRERSALPTPHEIRNHLDDYVIGQEQAKKVLAVAVYNHYKRLRNGDTSNGVELGKSNILLIGPTGSGKTLLAETLARLLDVPFTMADATTLTEAGYVGEDVENIIQKLLQKCDYDVQKAQRGIVYIDEIDKISRKSDNPSITRDVSGEGVQQALLKLIEGTVAAVPPQGGRKHPQQEFLQVDTSKILFICGGAFAGLDKVISHRVETGSGIGFGATVKAKSDKASEGELLAQVEPEDLIKFGLIPEFIGRLPVVATLNELSEEALIQILKEPKNALTKQYQALFNLEGVDLEFRDEALDAIAKKAMARKTGARGLRSIVEAALLDTMYDLPSMEDVEKVVIDESVIDGQSKPLLIYGKPEAQQASGE</sequence>
<protein>
    <recommendedName>
        <fullName evidence="1">ATP-dependent Clp protease ATP-binding subunit ClpX</fullName>
    </recommendedName>
</protein>
<evidence type="ECO:0000255" key="1">
    <source>
        <dbReference type="HAMAP-Rule" id="MF_00175"/>
    </source>
</evidence>
<evidence type="ECO:0000255" key="2">
    <source>
        <dbReference type="PROSITE-ProRule" id="PRU01250"/>
    </source>
</evidence>
<reference key="1">
    <citation type="journal article" date="2006" name="Proc. Natl. Acad. Sci. U.S.A.">
        <title>Identification of genes subject to positive selection in uropathogenic strains of Escherichia coli: a comparative genomics approach.</title>
        <authorList>
            <person name="Chen S.L."/>
            <person name="Hung C.-S."/>
            <person name="Xu J."/>
            <person name="Reigstad C.S."/>
            <person name="Magrini V."/>
            <person name="Sabo A."/>
            <person name="Blasiar D."/>
            <person name="Bieri T."/>
            <person name="Meyer R.R."/>
            <person name="Ozersky P."/>
            <person name="Armstrong J.R."/>
            <person name="Fulton R.S."/>
            <person name="Latreille J.P."/>
            <person name="Spieth J."/>
            <person name="Hooton T.M."/>
            <person name="Mardis E.R."/>
            <person name="Hultgren S.J."/>
            <person name="Gordon J.I."/>
        </authorList>
    </citation>
    <scope>NUCLEOTIDE SEQUENCE [LARGE SCALE GENOMIC DNA]</scope>
    <source>
        <strain>UTI89 / UPEC</strain>
    </source>
</reference>
<keyword id="KW-0067">ATP-binding</keyword>
<keyword id="KW-0143">Chaperone</keyword>
<keyword id="KW-0479">Metal-binding</keyword>
<keyword id="KW-0547">Nucleotide-binding</keyword>
<keyword id="KW-0862">Zinc</keyword>
<proteinExistence type="inferred from homology"/>
<feature type="chain" id="PRO_1000024552" description="ATP-dependent Clp protease ATP-binding subunit ClpX">
    <location>
        <begin position="1"/>
        <end position="424"/>
    </location>
</feature>
<feature type="domain" description="ClpX-type ZB" evidence="2">
    <location>
        <begin position="2"/>
        <end position="56"/>
    </location>
</feature>
<feature type="binding site" evidence="2">
    <location>
        <position position="15"/>
    </location>
    <ligand>
        <name>Zn(2+)</name>
        <dbReference type="ChEBI" id="CHEBI:29105"/>
    </ligand>
</feature>
<feature type="binding site" evidence="2">
    <location>
        <position position="18"/>
    </location>
    <ligand>
        <name>Zn(2+)</name>
        <dbReference type="ChEBI" id="CHEBI:29105"/>
    </ligand>
</feature>
<feature type="binding site" evidence="2">
    <location>
        <position position="37"/>
    </location>
    <ligand>
        <name>Zn(2+)</name>
        <dbReference type="ChEBI" id="CHEBI:29105"/>
    </ligand>
</feature>
<feature type="binding site" evidence="2">
    <location>
        <position position="40"/>
    </location>
    <ligand>
        <name>Zn(2+)</name>
        <dbReference type="ChEBI" id="CHEBI:29105"/>
    </ligand>
</feature>
<feature type="binding site" evidence="1">
    <location>
        <begin position="120"/>
        <end position="127"/>
    </location>
    <ligand>
        <name>ATP</name>
        <dbReference type="ChEBI" id="CHEBI:30616"/>
    </ligand>
</feature>
<comment type="function">
    <text evidence="1">ATP-dependent specificity component of the Clp protease. It directs the protease to specific substrates. Can perform chaperone functions in the absence of ClpP.</text>
</comment>
<comment type="subunit">
    <text evidence="1">Component of the ClpX-ClpP complex. Forms a hexameric ring that, in the presence of ATP, binds to fourteen ClpP subunits assembled into a disk-like structure with a central cavity, resembling the structure of eukaryotic proteasomes.</text>
</comment>
<comment type="similarity">
    <text evidence="1">Belongs to the ClpX chaperone family.</text>
</comment>
<organism>
    <name type="scientific">Escherichia coli (strain UTI89 / UPEC)</name>
    <dbReference type="NCBI Taxonomy" id="364106"/>
    <lineage>
        <taxon>Bacteria</taxon>
        <taxon>Pseudomonadati</taxon>
        <taxon>Pseudomonadota</taxon>
        <taxon>Gammaproteobacteria</taxon>
        <taxon>Enterobacterales</taxon>
        <taxon>Enterobacteriaceae</taxon>
        <taxon>Escherichia</taxon>
    </lineage>
</organism>
<dbReference type="EMBL" id="CP000243">
    <property type="protein sequence ID" value="ABE05967.1"/>
    <property type="molecule type" value="Genomic_DNA"/>
</dbReference>
<dbReference type="RefSeq" id="WP_000130305.1">
    <property type="nucleotide sequence ID" value="NZ_CP064825.1"/>
</dbReference>
<dbReference type="SMR" id="Q1RF97"/>
<dbReference type="GeneID" id="93777016"/>
<dbReference type="KEGG" id="eci:UTI89_C0466"/>
<dbReference type="HOGENOM" id="CLU_014218_8_2_6"/>
<dbReference type="Proteomes" id="UP000001952">
    <property type="component" value="Chromosome"/>
</dbReference>
<dbReference type="GO" id="GO:0009376">
    <property type="term" value="C:HslUV protease complex"/>
    <property type="evidence" value="ECO:0007669"/>
    <property type="project" value="TreeGrafter"/>
</dbReference>
<dbReference type="GO" id="GO:0005524">
    <property type="term" value="F:ATP binding"/>
    <property type="evidence" value="ECO:0007669"/>
    <property type="project" value="UniProtKB-UniRule"/>
</dbReference>
<dbReference type="GO" id="GO:0016887">
    <property type="term" value="F:ATP hydrolysis activity"/>
    <property type="evidence" value="ECO:0007669"/>
    <property type="project" value="InterPro"/>
</dbReference>
<dbReference type="GO" id="GO:0140662">
    <property type="term" value="F:ATP-dependent protein folding chaperone"/>
    <property type="evidence" value="ECO:0007669"/>
    <property type="project" value="InterPro"/>
</dbReference>
<dbReference type="GO" id="GO:0046983">
    <property type="term" value="F:protein dimerization activity"/>
    <property type="evidence" value="ECO:0007669"/>
    <property type="project" value="InterPro"/>
</dbReference>
<dbReference type="GO" id="GO:0051082">
    <property type="term" value="F:unfolded protein binding"/>
    <property type="evidence" value="ECO:0007669"/>
    <property type="project" value="UniProtKB-UniRule"/>
</dbReference>
<dbReference type="GO" id="GO:0008270">
    <property type="term" value="F:zinc ion binding"/>
    <property type="evidence" value="ECO:0007669"/>
    <property type="project" value="InterPro"/>
</dbReference>
<dbReference type="GO" id="GO:0051301">
    <property type="term" value="P:cell division"/>
    <property type="evidence" value="ECO:0007669"/>
    <property type="project" value="TreeGrafter"/>
</dbReference>
<dbReference type="GO" id="GO:0051603">
    <property type="term" value="P:proteolysis involved in protein catabolic process"/>
    <property type="evidence" value="ECO:0007669"/>
    <property type="project" value="TreeGrafter"/>
</dbReference>
<dbReference type="CDD" id="cd19497">
    <property type="entry name" value="RecA-like_ClpX"/>
    <property type="match status" value="1"/>
</dbReference>
<dbReference type="FunFam" id="1.10.8.60:FF:000002">
    <property type="entry name" value="ATP-dependent Clp protease ATP-binding subunit ClpX"/>
    <property type="match status" value="1"/>
</dbReference>
<dbReference type="FunFam" id="3.40.50.300:FF:000005">
    <property type="entry name" value="ATP-dependent Clp protease ATP-binding subunit ClpX"/>
    <property type="match status" value="1"/>
</dbReference>
<dbReference type="Gene3D" id="1.10.8.60">
    <property type="match status" value="1"/>
</dbReference>
<dbReference type="Gene3D" id="6.20.220.10">
    <property type="entry name" value="ClpX chaperone, C4-type zinc finger domain"/>
    <property type="match status" value="1"/>
</dbReference>
<dbReference type="Gene3D" id="3.40.50.300">
    <property type="entry name" value="P-loop containing nucleotide triphosphate hydrolases"/>
    <property type="match status" value="1"/>
</dbReference>
<dbReference type="HAMAP" id="MF_00175">
    <property type="entry name" value="ClpX"/>
    <property type="match status" value="1"/>
</dbReference>
<dbReference type="InterPro" id="IPR003593">
    <property type="entry name" value="AAA+_ATPase"/>
</dbReference>
<dbReference type="InterPro" id="IPR050052">
    <property type="entry name" value="ATP-dep_Clp_protease_ClpX"/>
</dbReference>
<dbReference type="InterPro" id="IPR003959">
    <property type="entry name" value="ATPase_AAA_core"/>
</dbReference>
<dbReference type="InterPro" id="IPR019489">
    <property type="entry name" value="Clp_ATPase_C"/>
</dbReference>
<dbReference type="InterPro" id="IPR004487">
    <property type="entry name" value="Clp_protease_ATP-bd_su_ClpX"/>
</dbReference>
<dbReference type="InterPro" id="IPR046425">
    <property type="entry name" value="ClpX_bact"/>
</dbReference>
<dbReference type="InterPro" id="IPR027417">
    <property type="entry name" value="P-loop_NTPase"/>
</dbReference>
<dbReference type="InterPro" id="IPR010603">
    <property type="entry name" value="Znf_CppX_C4"/>
</dbReference>
<dbReference type="InterPro" id="IPR038366">
    <property type="entry name" value="Znf_CppX_C4_sf"/>
</dbReference>
<dbReference type="NCBIfam" id="TIGR00382">
    <property type="entry name" value="clpX"/>
    <property type="match status" value="1"/>
</dbReference>
<dbReference type="NCBIfam" id="NF003745">
    <property type="entry name" value="PRK05342.1"/>
    <property type="match status" value="1"/>
</dbReference>
<dbReference type="PANTHER" id="PTHR48102:SF7">
    <property type="entry name" value="ATP-DEPENDENT CLP PROTEASE ATP-BINDING SUBUNIT CLPX-LIKE, MITOCHONDRIAL"/>
    <property type="match status" value="1"/>
</dbReference>
<dbReference type="PANTHER" id="PTHR48102">
    <property type="entry name" value="ATP-DEPENDENT CLP PROTEASE ATP-BINDING SUBUNIT CLPX-LIKE, MITOCHONDRIAL-RELATED"/>
    <property type="match status" value="1"/>
</dbReference>
<dbReference type="Pfam" id="PF07724">
    <property type="entry name" value="AAA_2"/>
    <property type="match status" value="1"/>
</dbReference>
<dbReference type="Pfam" id="PF10431">
    <property type="entry name" value="ClpB_D2-small"/>
    <property type="match status" value="1"/>
</dbReference>
<dbReference type="Pfam" id="PF06689">
    <property type="entry name" value="zf-C4_ClpX"/>
    <property type="match status" value="1"/>
</dbReference>
<dbReference type="SMART" id="SM00382">
    <property type="entry name" value="AAA"/>
    <property type="match status" value="1"/>
</dbReference>
<dbReference type="SMART" id="SM01086">
    <property type="entry name" value="ClpB_D2-small"/>
    <property type="match status" value="1"/>
</dbReference>
<dbReference type="SMART" id="SM00994">
    <property type="entry name" value="zf-C4_ClpX"/>
    <property type="match status" value="1"/>
</dbReference>
<dbReference type="SUPFAM" id="SSF57716">
    <property type="entry name" value="Glucocorticoid receptor-like (DNA-binding domain)"/>
    <property type="match status" value="1"/>
</dbReference>
<dbReference type="SUPFAM" id="SSF52540">
    <property type="entry name" value="P-loop containing nucleoside triphosphate hydrolases"/>
    <property type="match status" value="1"/>
</dbReference>
<dbReference type="PROSITE" id="PS51902">
    <property type="entry name" value="CLPX_ZB"/>
    <property type="match status" value="1"/>
</dbReference>
<accession>Q1RF97</accession>
<name>CLPX_ECOUT</name>
<gene>
    <name evidence="1" type="primary">clpX</name>
    <name type="ordered locus">UTI89_C0466</name>
</gene>